<reference key="1">
    <citation type="journal article" date="2010" name="Genome Biol. Evol.">
        <title>Continuing evolution of Burkholderia mallei through genome reduction and large-scale rearrangements.</title>
        <authorList>
            <person name="Losada L."/>
            <person name="Ronning C.M."/>
            <person name="DeShazer D."/>
            <person name="Woods D."/>
            <person name="Fedorova N."/>
            <person name="Kim H.S."/>
            <person name="Shabalina S.A."/>
            <person name="Pearson T.R."/>
            <person name="Brinkac L."/>
            <person name="Tan P."/>
            <person name="Nandi T."/>
            <person name="Crabtree J."/>
            <person name="Badger J."/>
            <person name="Beckstrom-Sternberg S."/>
            <person name="Saqib M."/>
            <person name="Schutzer S.E."/>
            <person name="Keim P."/>
            <person name="Nierman W.C."/>
        </authorList>
    </citation>
    <scope>NUCLEOTIDE SEQUENCE [LARGE SCALE GENOMIC DNA]</scope>
    <source>
        <strain>NCTC 10247</strain>
    </source>
</reference>
<gene>
    <name evidence="1" type="primary">rpsS</name>
    <name type="ordered locus">BMA10247_3482</name>
</gene>
<feature type="chain" id="PRO_1000051022" description="Small ribosomal subunit protein uS19">
    <location>
        <begin position="1"/>
        <end position="91"/>
    </location>
</feature>
<comment type="function">
    <text evidence="1">Protein S19 forms a complex with S13 that binds strongly to the 16S ribosomal RNA.</text>
</comment>
<comment type="similarity">
    <text evidence="1">Belongs to the universal ribosomal protein uS19 family.</text>
</comment>
<proteinExistence type="inferred from homology"/>
<accession>A3MRV8</accession>
<organism>
    <name type="scientific">Burkholderia mallei (strain NCTC 10247)</name>
    <dbReference type="NCBI Taxonomy" id="320389"/>
    <lineage>
        <taxon>Bacteria</taxon>
        <taxon>Pseudomonadati</taxon>
        <taxon>Pseudomonadota</taxon>
        <taxon>Betaproteobacteria</taxon>
        <taxon>Burkholderiales</taxon>
        <taxon>Burkholderiaceae</taxon>
        <taxon>Burkholderia</taxon>
        <taxon>pseudomallei group</taxon>
    </lineage>
</organism>
<protein>
    <recommendedName>
        <fullName evidence="1">Small ribosomal subunit protein uS19</fullName>
    </recommendedName>
    <alternativeName>
        <fullName evidence="2">30S ribosomal protein S19</fullName>
    </alternativeName>
</protein>
<name>RS19_BURM7</name>
<sequence length="91" mass="10108">MARSVKKGPFCDAHLLKKVEAAAASRDKKPIKTWSRRSTILPDFIGLTIAVHNGRQHVPVYISENMVGHKLGEFALTRTFKGHAADKKAKK</sequence>
<evidence type="ECO:0000255" key="1">
    <source>
        <dbReference type="HAMAP-Rule" id="MF_00531"/>
    </source>
</evidence>
<evidence type="ECO:0000305" key="2"/>
<keyword id="KW-0687">Ribonucleoprotein</keyword>
<keyword id="KW-0689">Ribosomal protein</keyword>
<keyword id="KW-0694">RNA-binding</keyword>
<keyword id="KW-0699">rRNA-binding</keyword>
<dbReference type="EMBL" id="CP000548">
    <property type="protein sequence ID" value="ABO05450.1"/>
    <property type="molecule type" value="Genomic_DNA"/>
</dbReference>
<dbReference type="RefSeq" id="WP_004199273.1">
    <property type="nucleotide sequence ID" value="NZ_CP007802.1"/>
</dbReference>
<dbReference type="SMR" id="A3MRV8"/>
<dbReference type="GeneID" id="98107156"/>
<dbReference type="KEGG" id="bmaz:BM44_3037"/>
<dbReference type="KEGG" id="bmn:BMA10247_3482"/>
<dbReference type="PATRIC" id="fig|320389.8.peg.3409"/>
<dbReference type="GO" id="GO:0005737">
    <property type="term" value="C:cytoplasm"/>
    <property type="evidence" value="ECO:0007669"/>
    <property type="project" value="UniProtKB-ARBA"/>
</dbReference>
<dbReference type="GO" id="GO:0015935">
    <property type="term" value="C:small ribosomal subunit"/>
    <property type="evidence" value="ECO:0007669"/>
    <property type="project" value="InterPro"/>
</dbReference>
<dbReference type="GO" id="GO:0019843">
    <property type="term" value="F:rRNA binding"/>
    <property type="evidence" value="ECO:0007669"/>
    <property type="project" value="UniProtKB-UniRule"/>
</dbReference>
<dbReference type="GO" id="GO:0003735">
    <property type="term" value="F:structural constituent of ribosome"/>
    <property type="evidence" value="ECO:0007669"/>
    <property type="project" value="InterPro"/>
</dbReference>
<dbReference type="GO" id="GO:0000028">
    <property type="term" value="P:ribosomal small subunit assembly"/>
    <property type="evidence" value="ECO:0007669"/>
    <property type="project" value="TreeGrafter"/>
</dbReference>
<dbReference type="GO" id="GO:0006412">
    <property type="term" value="P:translation"/>
    <property type="evidence" value="ECO:0007669"/>
    <property type="project" value="UniProtKB-UniRule"/>
</dbReference>
<dbReference type="FunFam" id="3.30.860.10:FF:000001">
    <property type="entry name" value="30S ribosomal protein S19"/>
    <property type="match status" value="1"/>
</dbReference>
<dbReference type="Gene3D" id="3.30.860.10">
    <property type="entry name" value="30s Ribosomal Protein S19, Chain A"/>
    <property type="match status" value="1"/>
</dbReference>
<dbReference type="HAMAP" id="MF_00531">
    <property type="entry name" value="Ribosomal_uS19"/>
    <property type="match status" value="1"/>
</dbReference>
<dbReference type="InterPro" id="IPR002222">
    <property type="entry name" value="Ribosomal_uS19"/>
</dbReference>
<dbReference type="InterPro" id="IPR005732">
    <property type="entry name" value="Ribosomal_uS19_bac-type"/>
</dbReference>
<dbReference type="InterPro" id="IPR020934">
    <property type="entry name" value="Ribosomal_uS19_CS"/>
</dbReference>
<dbReference type="InterPro" id="IPR023575">
    <property type="entry name" value="Ribosomal_uS19_SF"/>
</dbReference>
<dbReference type="NCBIfam" id="TIGR01050">
    <property type="entry name" value="rpsS_bact"/>
    <property type="match status" value="1"/>
</dbReference>
<dbReference type="PANTHER" id="PTHR11880">
    <property type="entry name" value="RIBOSOMAL PROTEIN S19P FAMILY MEMBER"/>
    <property type="match status" value="1"/>
</dbReference>
<dbReference type="PANTHER" id="PTHR11880:SF8">
    <property type="entry name" value="SMALL RIBOSOMAL SUBUNIT PROTEIN US19M"/>
    <property type="match status" value="1"/>
</dbReference>
<dbReference type="Pfam" id="PF00203">
    <property type="entry name" value="Ribosomal_S19"/>
    <property type="match status" value="1"/>
</dbReference>
<dbReference type="PIRSF" id="PIRSF002144">
    <property type="entry name" value="Ribosomal_S19"/>
    <property type="match status" value="1"/>
</dbReference>
<dbReference type="PRINTS" id="PR00975">
    <property type="entry name" value="RIBOSOMALS19"/>
</dbReference>
<dbReference type="SUPFAM" id="SSF54570">
    <property type="entry name" value="Ribosomal protein S19"/>
    <property type="match status" value="1"/>
</dbReference>
<dbReference type="PROSITE" id="PS00323">
    <property type="entry name" value="RIBOSOMAL_S19"/>
    <property type="match status" value="1"/>
</dbReference>